<accession>Q1ED39</accession>
<accession>O43328</accession>
<accession>Q5FWF3</accession>
<proteinExistence type="evidence at protein level"/>
<organism>
    <name type="scientific">Homo sapiens</name>
    <name type="common">Human</name>
    <dbReference type="NCBI Taxonomy" id="9606"/>
    <lineage>
        <taxon>Eukaryota</taxon>
        <taxon>Metazoa</taxon>
        <taxon>Chordata</taxon>
        <taxon>Craniata</taxon>
        <taxon>Vertebrata</taxon>
        <taxon>Euteleostomi</taxon>
        <taxon>Mammalia</taxon>
        <taxon>Eutheria</taxon>
        <taxon>Euarchontoglires</taxon>
        <taxon>Primates</taxon>
        <taxon>Haplorrhini</taxon>
        <taxon>Catarrhini</taxon>
        <taxon>Hominidae</taxon>
        <taxon>Homo</taxon>
    </lineage>
</organism>
<gene>
    <name type="primary">KNOP1</name>
    <name type="synonym">C16orf88</name>
    <name type="synonym">FAM191A</name>
    <name type="synonym">TSG118</name>
</gene>
<sequence length="458" mass="51589">MITKTHKVDLGLPEKKKKKKVVKEPETRYSVLNNDDYFADVSPLRATSPSKSVAHGQAPEMPLVKKKKKKKKGVSTLCEEHVEPETTLPARRTEKSPSLRKQVFGHLEFLSGEKKNKKSPLAMSHASGVKTSPDPRQGEEETRVGKKLKKHKKEKKGAQDPTAFSVQDPWFCEAREARDVGDTCSVGKKDEEQAALGQKRKRKSPREHNGKVKKKKKIHQEGDALPGHSKPSRSMESSPRKGSKKKPVKVEAPEYIPISDDPKASAKKKMKSKKKVEQPVIEEPALKRKKKKKRKESGVAGDPWKEETDTDLEVVLEKKGNMDEAHIDQVRRKALQEEIDRESGKTEASETRKWTGTQFGQWDTAGFENEDQKLKFLRLMGGFKNLSPSFSRPASTIARPNMALGKKAADSLQQNLQRDYDRAMSWKYSRGAGLGFSTAPNKIFYIDRNASKSVKLED</sequence>
<feature type="chain" id="PRO_0000321938" description="Lysine-rich nucleolar protein 1">
    <location>
        <begin position="1"/>
        <end position="458"/>
    </location>
</feature>
<feature type="region of interest" description="Disordered" evidence="2">
    <location>
        <begin position="1"/>
        <end position="21"/>
    </location>
</feature>
<feature type="region of interest" description="Disordered" evidence="2">
    <location>
        <begin position="46"/>
        <end position="305"/>
    </location>
</feature>
<feature type="region of interest" description="Interaction with ZNF106" evidence="1">
    <location>
        <begin position="306"/>
        <end position="458"/>
    </location>
</feature>
<feature type="region of interest" description="Disordered" evidence="2">
    <location>
        <begin position="336"/>
        <end position="355"/>
    </location>
</feature>
<feature type="compositionally biased region" description="Basic and acidic residues" evidence="2">
    <location>
        <begin position="1"/>
        <end position="14"/>
    </location>
</feature>
<feature type="compositionally biased region" description="Basic residues" evidence="2">
    <location>
        <begin position="64"/>
        <end position="73"/>
    </location>
</feature>
<feature type="compositionally biased region" description="Basic residues" evidence="2">
    <location>
        <begin position="145"/>
        <end position="155"/>
    </location>
</feature>
<feature type="compositionally biased region" description="Basic and acidic residues" evidence="2">
    <location>
        <begin position="173"/>
        <end position="192"/>
    </location>
</feature>
<feature type="compositionally biased region" description="Basic residues" evidence="2">
    <location>
        <begin position="198"/>
        <end position="218"/>
    </location>
</feature>
<feature type="compositionally biased region" description="Basic residues" evidence="2">
    <location>
        <begin position="265"/>
        <end position="274"/>
    </location>
</feature>
<feature type="compositionally biased region" description="Basic and acidic residues" evidence="2">
    <location>
        <begin position="336"/>
        <end position="353"/>
    </location>
</feature>
<feature type="modified residue" description="Phosphoserine" evidence="4 5 6 7 8 10">
    <location>
        <position position="42"/>
    </location>
</feature>
<feature type="modified residue" description="Phosphoserine" evidence="5">
    <location>
        <position position="50"/>
    </location>
</feature>
<feature type="modified residue" description="Phosphoserine" evidence="6 8">
    <location>
        <position position="111"/>
    </location>
</feature>
<feature type="modified residue" description="Phosphoserine" evidence="8">
    <location>
        <position position="132"/>
    </location>
</feature>
<feature type="modified residue" description="Phosphoserine" evidence="5 8">
    <location>
        <position position="265"/>
    </location>
</feature>
<feature type="modified residue" description="Phosphothreonine" evidence="5">
    <location>
        <position position="308"/>
    </location>
</feature>
<feature type="modified residue" description="Phosphothreonine" evidence="5 8">
    <location>
        <position position="310"/>
    </location>
</feature>
<feature type="modified residue" description="Omega-N-methylarginine" evidence="9">
    <location>
        <position position="430"/>
    </location>
</feature>
<feature type="cross-link" description="Glycyl lysine isopeptide (Lys-Gly) (interchain with G-Cter in SUMO2)" evidence="14">
    <location>
        <position position="7"/>
    </location>
</feature>
<feature type="cross-link" description="Glycyl lysine isopeptide (Lys-Gly) (interchain with G-Cter in SUMO2)" evidence="14">
    <location>
        <position position="101"/>
    </location>
</feature>
<feature type="cross-link" description="Glycyl lysine isopeptide (Lys-Gly) (interchain with G-Cter in SUMO2)" evidence="14">
    <location>
        <position position="130"/>
    </location>
</feature>
<feature type="cross-link" description="Glycyl lysine isopeptide (Lys-Gly) (interchain with G-Cter in SUMO1); alternate" evidence="11">
    <location>
        <position position="249"/>
    </location>
</feature>
<feature type="cross-link" description="Glycyl lysine isopeptide (Lys-Gly) (interchain with G-Cter in SUMO2); alternate" evidence="14">
    <location>
        <position position="249"/>
    </location>
</feature>
<feature type="cross-link" description="Glycyl lysine isopeptide (Lys-Gly) (interchain with G-Cter in SUMO2)" evidence="12 14">
    <location>
        <position position="275"/>
    </location>
</feature>
<feature type="cross-link" description="Glycyl lysine isopeptide (Lys-Gly) (interchain with G-Cter in SUMO2)" evidence="14">
    <location>
        <position position="287"/>
    </location>
</feature>
<feature type="cross-link" description="Glycyl lysine isopeptide (Lys-Gly) (interchain with G-Cter in SUMO2)" evidence="14">
    <location>
        <position position="305"/>
    </location>
</feature>
<feature type="cross-link" description="Glycyl lysine isopeptide (Lys-Gly) (interchain with G-Cter in SUMO2)" evidence="14">
    <location>
        <position position="319"/>
    </location>
</feature>
<feature type="cross-link" description="Glycyl lysine isopeptide (Lys-Gly) (interchain with G-Cter in SUMO2)" evidence="14">
    <location>
        <position position="353"/>
    </location>
</feature>
<feature type="cross-link" description="Glycyl lysine isopeptide (Lys-Gly) (interchain with G-Cter in SUMO2)" evidence="13 14">
    <location>
        <position position="373"/>
    </location>
</feature>
<feature type="cross-link" description="Glycyl lysine isopeptide (Lys-Gly) (interchain with G-Cter in SUMO2)" evidence="14">
    <location>
        <position position="375"/>
    </location>
</feature>
<feature type="cross-link" description="Glycyl lysine isopeptide (Lys-Gly) (interchain with G-Cter in SUMO2)" evidence="12 14">
    <location>
        <position position="407"/>
    </location>
</feature>
<feature type="cross-link" description="Glycyl lysine isopeptide (Lys-Gly) (interchain with G-Cter in SUMO2)" evidence="14">
    <location>
        <position position="442"/>
    </location>
</feature>
<feature type="sequence variant" id="VAR_061716" description="In dbSNP:rs11640454.">
    <original>R</original>
    <variation>Q</variation>
    <location>
        <position position="28"/>
    </location>
</feature>
<feature type="sequence variant" id="VAR_039387" description="In dbSNP:rs2074036.">
    <original>A</original>
    <variation>V</variation>
    <location>
        <position position="266"/>
    </location>
</feature>
<feature type="sequence variant" id="VAR_061717" description="In dbSNP:rs28424569.">
    <original>V</original>
    <variation>A</variation>
    <location>
        <position position="276"/>
    </location>
</feature>
<comment type="subunit">
    <text evidence="1">Interacts with ZNF106.</text>
</comment>
<comment type="interaction">
    <interactant intactId="EBI-9977982">
        <id>Q1ED39</id>
    </interactant>
    <interactant intactId="EBI-297683">
        <id>Q96CW1</id>
        <label>AP2M1</label>
    </interactant>
    <organismsDiffer>false</organismsDiffer>
    <experiments>3</experiments>
</comment>
<comment type="subcellular location">
    <subcellularLocation>
        <location evidence="1">Nucleus</location>
        <location evidence="1">Nucleolus</location>
    </subcellularLocation>
</comment>
<comment type="sequence caution" evidence="3">
    <conflict type="erroneous initiation">
        <sequence resource="EMBL-CDS" id="AAC05805"/>
    </conflict>
    <text>Truncated N-terminus.</text>
</comment>
<comment type="sequence caution" evidence="3">
    <conflict type="miscellaneous discrepancy">
        <sequence resource="EMBL-CDS" id="AAH89430"/>
    </conflict>
    <text>Contaminating sequence. Potential poly-A sequence.</text>
</comment>
<evidence type="ECO:0000250" key="1"/>
<evidence type="ECO:0000256" key="2">
    <source>
        <dbReference type="SAM" id="MobiDB-lite"/>
    </source>
</evidence>
<evidence type="ECO:0000305" key="3"/>
<evidence type="ECO:0007744" key="4">
    <source>
    </source>
</evidence>
<evidence type="ECO:0007744" key="5">
    <source>
    </source>
</evidence>
<evidence type="ECO:0007744" key="6">
    <source>
    </source>
</evidence>
<evidence type="ECO:0007744" key="7">
    <source>
    </source>
</evidence>
<evidence type="ECO:0007744" key="8">
    <source>
    </source>
</evidence>
<evidence type="ECO:0007744" key="9">
    <source>
    </source>
</evidence>
<evidence type="ECO:0007744" key="10">
    <source>
    </source>
</evidence>
<evidence type="ECO:0007744" key="11">
    <source>
    </source>
</evidence>
<evidence type="ECO:0007744" key="12">
    <source>
    </source>
</evidence>
<evidence type="ECO:0007744" key="13">
    <source>
    </source>
</evidence>
<evidence type="ECO:0007744" key="14">
    <source>
    </source>
</evidence>
<protein>
    <recommendedName>
        <fullName>Lysine-rich nucleolar protein 1</fullName>
    </recommendedName>
    <alternativeName>
        <fullName>Protein FAM191A</fullName>
    </alternativeName>
    <alternativeName>
        <fullName>Testis-specific gene 118 protein</fullName>
    </alternativeName>
</protein>
<keyword id="KW-1017">Isopeptide bond</keyword>
<keyword id="KW-0488">Methylation</keyword>
<keyword id="KW-0539">Nucleus</keyword>
<keyword id="KW-0597">Phosphoprotein</keyword>
<keyword id="KW-1267">Proteomics identification</keyword>
<keyword id="KW-1185">Reference proteome</keyword>
<keyword id="KW-0832">Ubl conjugation</keyword>
<name>KNOP1_HUMAN</name>
<dbReference type="EMBL" id="AC002550">
    <property type="protein sequence ID" value="AAC05805.1"/>
    <property type="status" value="ALT_INIT"/>
    <property type="molecule type" value="Genomic_DNA"/>
</dbReference>
<dbReference type="EMBL" id="BC089430">
    <property type="protein sequence ID" value="AAH89430.1"/>
    <property type="status" value="ALT_SEQ"/>
    <property type="molecule type" value="mRNA"/>
</dbReference>
<dbReference type="EMBL" id="BC117562">
    <property type="protein sequence ID" value="AAI17563.1"/>
    <property type="molecule type" value="mRNA"/>
</dbReference>
<dbReference type="CCDS" id="CCDS42127.1"/>
<dbReference type="RefSeq" id="NP_001013009.2">
    <property type="nucleotide sequence ID" value="NM_001012991.3"/>
</dbReference>
<dbReference type="RefSeq" id="NP_001335457.1">
    <property type="nucleotide sequence ID" value="NM_001348528.2"/>
</dbReference>
<dbReference type="RefSeq" id="NP_001335458.1">
    <property type="nucleotide sequence ID" value="NM_001348529.2"/>
</dbReference>
<dbReference type="RefSeq" id="NP_001335459.1">
    <property type="nucleotide sequence ID" value="NM_001348530.2"/>
</dbReference>
<dbReference type="RefSeq" id="NP_001335460.1">
    <property type="nucleotide sequence ID" value="NM_001348531.2"/>
</dbReference>
<dbReference type="BioGRID" id="134613">
    <property type="interactions" value="310"/>
</dbReference>
<dbReference type="FunCoup" id="Q1ED39">
    <property type="interactions" value="731"/>
</dbReference>
<dbReference type="IntAct" id="Q1ED39">
    <property type="interactions" value="131"/>
</dbReference>
<dbReference type="MINT" id="Q1ED39"/>
<dbReference type="STRING" id="9606.ENSP00000219837"/>
<dbReference type="GlyGen" id="Q1ED39">
    <property type="glycosylation" value="1 site, 1 O-linked glycan (1 site)"/>
</dbReference>
<dbReference type="iPTMnet" id="Q1ED39"/>
<dbReference type="PhosphoSitePlus" id="Q1ED39"/>
<dbReference type="SwissPalm" id="Q1ED39"/>
<dbReference type="BioMuta" id="KNOP1"/>
<dbReference type="DMDM" id="121940661"/>
<dbReference type="jPOST" id="Q1ED39"/>
<dbReference type="MassIVE" id="Q1ED39"/>
<dbReference type="PaxDb" id="9606-ENSP00000219837"/>
<dbReference type="PeptideAtlas" id="Q1ED39"/>
<dbReference type="ProteomicsDB" id="61208"/>
<dbReference type="Pumba" id="Q1ED39"/>
<dbReference type="Antibodypedia" id="52534">
    <property type="antibodies" value="21 antibodies from 9 providers"/>
</dbReference>
<dbReference type="DNASU" id="400506"/>
<dbReference type="Ensembl" id="ENST00000219837.12">
    <property type="protein sequence ID" value="ENSP00000219837.7"/>
    <property type="gene ID" value="ENSG00000103550.14"/>
</dbReference>
<dbReference type="GeneID" id="400506"/>
<dbReference type="KEGG" id="hsa:400506"/>
<dbReference type="MANE-Select" id="ENST00000219837.12">
    <property type="protein sequence ID" value="ENSP00000219837.7"/>
    <property type="RefSeq nucleotide sequence ID" value="NM_001012991.3"/>
    <property type="RefSeq protein sequence ID" value="NP_001013009.2"/>
</dbReference>
<dbReference type="UCSC" id="uc002dgq.4">
    <property type="organism name" value="human"/>
</dbReference>
<dbReference type="AGR" id="HGNC:34404"/>
<dbReference type="CTD" id="400506"/>
<dbReference type="DisGeNET" id="400506"/>
<dbReference type="GeneCards" id="KNOP1"/>
<dbReference type="HGNC" id="HGNC:34404">
    <property type="gene designation" value="KNOP1"/>
</dbReference>
<dbReference type="HPA" id="ENSG00000103550">
    <property type="expression patterns" value="Low tissue specificity"/>
</dbReference>
<dbReference type="neXtProt" id="NX_Q1ED39"/>
<dbReference type="OpenTargets" id="ENSG00000103550"/>
<dbReference type="PharmGKB" id="PA162378471"/>
<dbReference type="VEuPathDB" id="HostDB:ENSG00000103550"/>
<dbReference type="eggNOG" id="ENOG502S1WB">
    <property type="taxonomic scope" value="Eukaryota"/>
</dbReference>
<dbReference type="GeneTree" id="ENSGT00500000044955"/>
<dbReference type="HOGENOM" id="CLU_048750_0_0_1"/>
<dbReference type="InParanoid" id="Q1ED39"/>
<dbReference type="OMA" id="WFCEARD"/>
<dbReference type="OrthoDB" id="9451331at2759"/>
<dbReference type="PAN-GO" id="Q1ED39">
    <property type="GO annotations" value="0 GO annotations based on evolutionary models"/>
</dbReference>
<dbReference type="PhylomeDB" id="Q1ED39"/>
<dbReference type="TreeFam" id="TF336149"/>
<dbReference type="PathwayCommons" id="Q1ED39"/>
<dbReference type="SignaLink" id="Q1ED39"/>
<dbReference type="BioGRID-ORCS" id="400506">
    <property type="hits" value="11 hits in 1147 CRISPR screens"/>
</dbReference>
<dbReference type="CD-CODE" id="91857CE7">
    <property type="entry name" value="Nucleolus"/>
</dbReference>
<dbReference type="ChiTaRS" id="KNOP1">
    <property type="organism name" value="human"/>
</dbReference>
<dbReference type="GenomeRNAi" id="400506"/>
<dbReference type="Pharos" id="Q1ED39">
    <property type="development level" value="Tdark"/>
</dbReference>
<dbReference type="PRO" id="PR:Q1ED39"/>
<dbReference type="Proteomes" id="UP000005640">
    <property type="component" value="Chromosome 16"/>
</dbReference>
<dbReference type="RNAct" id="Q1ED39">
    <property type="molecule type" value="protein"/>
</dbReference>
<dbReference type="Bgee" id="ENSG00000103550">
    <property type="expression patterns" value="Expressed in sural nerve and 191 other cell types or tissues"/>
</dbReference>
<dbReference type="ExpressionAtlas" id="Q1ED39">
    <property type="expression patterns" value="baseline and differential"/>
</dbReference>
<dbReference type="GO" id="GO:0005730">
    <property type="term" value="C:nucleolus"/>
    <property type="evidence" value="ECO:0007669"/>
    <property type="project" value="UniProtKB-SubCell"/>
</dbReference>
<dbReference type="GO" id="GO:0003723">
    <property type="term" value="F:RNA binding"/>
    <property type="evidence" value="ECO:0007005"/>
    <property type="project" value="UniProtKB"/>
</dbReference>
<dbReference type="InterPro" id="IPR028124">
    <property type="entry name" value="SMAP_dom"/>
</dbReference>
<dbReference type="PANTHER" id="PTHR22426">
    <property type="entry name" value="ARGININE_SERINE-RICH COILED-COIL PROTEIN 2"/>
    <property type="match status" value="1"/>
</dbReference>
<dbReference type="PANTHER" id="PTHR22426:SF4">
    <property type="entry name" value="LYSINE-RICH NUCLEOLAR PROTEIN 1"/>
    <property type="match status" value="1"/>
</dbReference>
<dbReference type="Pfam" id="PF15477">
    <property type="entry name" value="SMAP"/>
    <property type="match status" value="1"/>
</dbReference>
<reference key="1">
    <citation type="journal article" date="1999" name="Genomics">
        <title>Genome duplications and other features in 12 Mb of DNA sequence from human chromosome 16p and 16q.</title>
        <authorList>
            <person name="Loftus B.J."/>
            <person name="Kim U.-J."/>
            <person name="Sneddon V.P."/>
            <person name="Kalush F."/>
            <person name="Brandon R."/>
            <person name="Fuhrmann J."/>
            <person name="Mason T."/>
            <person name="Crosby M.L."/>
            <person name="Barnstead M."/>
            <person name="Cronin L."/>
            <person name="Mays A.D."/>
            <person name="Cao Y."/>
            <person name="Xu R.X."/>
            <person name="Kang H.-L."/>
            <person name="Mitchell S."/>
            <person name="Eichler E.E."/>
            <person name="Harris P.C."/>
            <person name="Venter J.C."/>
            <person name="Adams M.D."/>
        </authorList>
    </citation>
    <scope>NUCLEOTIDE SEQUENCE [LARGE SCALE GENOMIC DNA]</scope>
</reference>
<reference key="2">
    <citation type="journal article" date="2004" name="Genome Res.">
        <title>The status, quality, and expansion of the NIH full-length cDNA project: the Mammalian Gene Collection (MGC).</title>
        <authorList>
            <consortium name="The MGC Project Team"/>
        </authorList>
    </citation>
    <scope>NUCLEOTIDE SEQUENCE [LARGE SCALE MRNA]</scope>
    <source>
        <tissue>Embryonic stem cell</tissue>
        <tissue>Lymph</tissue>
    </source>
</reference>
<reference key="3">
    <citation type="journal article" date="2007" name="Mol. Cell. Proteomics">
        <title>Quantitative phosphoproteome profiling of Wnt3a-mediated signaling network: indicating the involvement of ribonucleoside-diphosphate reductase M2 subunit phosphorylation at residue serine 20 in canonical Wnt signal transduction.</title>
        <authorList>
            <person name="Tang L.-Y."/>
            <person name="Deng N."/>
            <person name="Wang L.-S."/>
            <person name="Dai J."/>
            <person name="Wang Z.-L."/>
            <person name="Jiang X.-S."/>
            <person name="Li S.-J."/>
            <person name="Li L."/>
            <person name="Sheng Q.-H."/>
            <person name="Wu D.-Q."/>
            <person name="Li L."/>
            <person name="Zeng R."/>
        </authorList>
    </citation>
    <scope>PHOSPHORYLATION [LARGE SCALE ANALYSIS] AT SER-42</scope>
    <scope>IDENTIFICATION BY MASS SPECTROMETRY [LARGE SCALE ANALYSIS]</scope>
    <source>
        <tissue>Embryonic kidney</tissue>
    </source>
</reference>
<reference key="4">
    <citation type="journal article" date="2008" name="Proc. Natl. Acad. Sci. U.S.A.">
        <title>A quantitative atlas of mitotic phosphorylation.</title>
        <authorList>
            <person name="Dephoure N."/>
            <person name="Zhou C."/>
            <person name="Villen J."/>
            <person name="Beausoleil S.A."/>
            <person name="Bakalarski C.E."/>
            <person name="Elledge S.J."/>
            <person name="Gygi S.P."/>
        </authorList>
    </citation>
    <scope>PHOSPHORYLATION [LARGE SCALE ANALYSIS] AT SER-42; SER-50; SER-265; THR-308 AND THR-310</scope>
    <scope>IDENTIFICATION BY MASS SPECTROMETRY [LARGE SCALE ANALYSIS]</scope>
    <source>
        <tissue>Cervix carcinoma</tissue>
    </source>
</reference>
<reference key="5">
    <citation type="journal article" date="2010" name="Sci. Signal.">
        <title>Quantitative phosphoproteomics reveals widespread full phosphorylation site occupancy during mitosis.</title>
        <authorList>
            <person name="Olsen J.V."/>
            <person name="Vermeulen M."/>
            <person name="Santamaria A."/>
            <person name="Kumar C."/>
            <person name="Miller M.L."/>
            <person name="Jensen L.J."/>
            <person name="Gnad F."/>
            <person name="Cox J."/>
            <person name="Jensen T.S."/>
            <person name="Nigg E.A."/>
            <person name="Brunak S."/>
            <person name="Mann M."/>
        </authorList>
    </citation>
    <scope>PHOSPHORYLATION [LARGE SCALE ANALYSIS] AT SER-42 AND SER-111</scope>
    <scope>IDENTIFICATION BY MASS SPECTROMETRY [LARGE SCALE ANALYSIS]</scope>
    <source>
        <tissue>Cervix carcinoma</tissue>
    </source>
</reference>
<reference key="6">
    <citation type="journal article" date="2011" name="BMC Syst. Biol.">
        <title>Initial characterization of the human central proteome.</title>
        <authorList>
            <person name="Burkard T.R."/>
            <person name="Planyavsky M."/>
            <person name="Kaupe I."/>
            <person name="Breitwieser F.P."/>
            <person name="Buerckstuemmer T."/>
            <person name="Bennett K.L."/>
            <person name="Superti-Furga G."/>
            <person name="Colinge J."/>
        </authorList>
    </citation>
    <scope>IDENTIFICATION BY MASS SPECTROMETRY [LARGE SCALE ANALYSIS]</scope>
</reference>
<reference key="7">
    <citation type="journal article" date="2011" name="Sci. Signal.">
        <title>System-wide temporal characterization of the proteome and phosphoproteome of human embryonic stem cell differentiation.</title>
        <authorList>
            <person name="Rigbolt K.T."/>
            <person name="Prokhorova T.A."/>
            <person name="Akimov V."/>
            <person name="Henningsen J."/>
            <person name="Johansen P.T."/>
            <person name="Kratchmarova I."/>
            <person name="Kassem M."/>
            <person name="Mann M."/>
            <person name="Olsen J.V."/>
            <person name="Blagoev B."/>
        </authorList>
    </citation>
    <scope>PHOSPHORYLATION [LARGE SCALE ANALYSIS] AT SER-42</scope>
    <scope>IDENTIFICATION BY MASS SPECTROMETRY [LARGE SCALE ANALYSIS]</scope>
</reference>
<reference key="8">
    <citation type="journal article" date="2013" name="J. Proteome Res.">
        <title>Toward a comprehensive characterization of a human cancer cell phosphoproteome.</title>
        <authorList>
            <person name="Zhou H."/>
            <person name="Di Palma S."/>
            <person name="Preisinger C."/>
            <person name="Peng M."/>
            <person name="Polat A.N."/>
            <person name="Heck A.J."/>
            <person name="Mohammed S."/>
        </authorList>
    </citation>
    <scope>PHOSPHORYLATION [LARGE SCALE ANALYSIS] AT SER-42; SER-111; SER-132; SER-265 AND THR-310</scope>
    <scope>IDENTIFICATION BY MASS SPECTROMETRY [LARGE SCALE ANALYSIS]</scope>
    <source>
        <tissue>Cervix carcinoma</tissue>
        <tissue>Erythroleukemia</tissue>
    </source>
</reference>
<reference key="9">
    <citation type="journal article" date="2014" name="J. Proteomics">
        <title>An enzyme assisted RP-RPLC approach for in-depth analysis of human liver phosphoproteome.</title>
        <authorList>
            <person name="Bian Y."/>
            <person name="Song C."/>
            <person name="Cheng K."/>
            <person name="Dong M."/>
            <person name="Wang F."/>
            <person name="Huang J."/>
            <person name="Sun D."/>
            <person name="Wang L."/>
            <person name="Ye M."/>
            <person name="Zou H."/>
        </authorList>
    </citation>
    <scope>PHOSPHORYLATION [LARGE SCALE ANALYSIS] AT SER-42</scope>
    <scope>IDENTIFICATION BY MASS SPECTROMETRY [LARGE SCALE ANALYSIS]</scope>
    <source>
        <tissue>Liver</tissue>
    </source>
</reference>
<reference key="10">
    <citation type="journal article" date="2014" name="Mol. Cell. Proteomics">
        <title>Immunoaffinity enrichment and mass spectrometry analysis of protein methylation.</title>
        <authorList>
            <person name="Guo A."/>
            <person name="Gu H."/>
            <person name="Zhou J."/>
            <person name="Mulhern D."/>
            <person name="Wang Y."/>
            <person name="Lee K.A."/>
            <person name="Yang V."/>
            <person name="Aguiar M."/>
            <person name="Kornhauser J."/>
            <person name="Jia X."/>
            <person name="Ren J."/>
            <person name="Beausoleil S.A."/>
            <person name="Silva J.C."/>
            <person name="Vemulapalli V."/>
            <person name="Bedford M.T."/>
            <person name="Comb M.J."/>
        </authorList>
    </citation>
    <scope>METHYLATION [LARGE SCALE ANALYSIS] AT ARG-430</scope>
    <scope>IDENTIFICATION BY MASS SPECTROMETRY [LARGE SCALE ANALYSIS]</scope>
    <source>
        <tissue>Colon carcinoma</tissue>
    </source>
</reference>
<reference key="11">
    <citation type="journal article" date="2014" name="Nat. Struct. Mol. Biol.">
        <title>Uncovering global SUMOylation signaling networks in a site-specific manner.</title>
        <authorList>
            <person name="Hendriks I.A."/>
            <person name="D'Souza R.C."/>
            <person name="Yang B."/>
            <person name="Verlaan-de Vries M."/>
            <person name="Mann M."/>
            <person name="Vertegaal A.C."/>
        </authorList>
    </citation>
    <scope>SUMOYLATION [LARGE SCALE ANALYSIS] AT LYS-275 AND LYS-407</scope>
    <scope>IDENTIFICATION BY MASS SPECTROMETRY [LARGE SCALE ANALYSIS]</scope>
</reference>
<reference key="12">
    <citation type="journal article" date="2014" name="Proc. Natl. Acad. Sci. U.S.A.">
        <title>Mapping of SUMO sites and analysis of SUMOylation changes induced by external stimuli.</title>
        <authorList>
            <person name="Impens F."/>
            <person name="Radoshevich L."/>
            <person name="Cossart P."/>
            <person name="Ribet D."/>
        </authorList>
    </citation>
    <scope>SUMOYLATION [LARGE SCALE ANALYSIS] AT LYS-249</scope>
    <scope>IDENTIFICATION BY MASS SPECTROMETRY [LARGE SCALE ANALYSIS]</scope>
</reference>
<reference key="13">
    <citation type="journal article" date="2015" name="Cell Rep.">
        <title>SUMO-2 orchestrates chromatin modifiers in response to DNA damage.</title>
        <authorList>
            <person name="Hendriks I.A."/>
            <person name="Treffers L.W."/>
            <person name="Verlaan-de Vries M."/>
            <person name="Olsen J.V."/>
            <person name="Vertegaal A.C."/>
        </authorList>
    </citation>
    <scope>SUMOYLATION [LARGE SCALE ANALYSIS] AT LYS-373</scope>
    <scope>IDENTIFICATION BY MASS SPECTROMETRY [LARGE SCALE ANALYSIS]</scope>
</reference>
<reference key="14">
    <citation type="journal article" date="2017" name="Nat. Struct. Mol. Biol.">
        <title>Site-specific mapping of the human SUMO proteome reveals co-modification with phosphorylation.</title>
        <authorList>
            <person name="Hendriks I.A."/>
            <person name="Lyon D."/>
            <person name="Young C."/>
            <person name="Jensen L.J."/>
            <person name="Vertegaal A.C."/>
            <person name="Nielsen M.L."/>
        </authorList>
    </citation>
    <scope>SUMOYLATION [LARGE SCALE ANALYSIS] AT LYS-7; LYS-101; LYS-130; LYS-249; LYS-275; LYS-287; LYS-305; LYS-319; LYS-353; LYS-373; LYS-375; LYS-407 AND LYS-442</scope>
    <scope>IDENTIFICATION BY MASS SPECTROMETRY [LARGE SCALE ANALYSIS]</scope>
</reference>